<gene>
    <name evidence="1" type="primary">recF</name>
    <name type="ordered locus">EC55989_4169</name>
</gene>
<organism>
    <name type="scientific">Escherichia coli (strain 55989 / EAEC)</name>
    <dbReference type="NCBI Taxonomy" id="585055"/>
    <lineage>
        <taxon>Bacteria</taxon>
        <taxon>Pseudomonadati</taxon>
        <taxon>Pseudomonadota</taxon>
        <taxon>Gammaproteobacteria</taxon>
        <taxon>Enterobacterales</taxon>
        <taxon>Enterobacteriaceae</taxon>
        <taxon>Escherichia</taxon>
    </lineage>
</organism>
<sequence>MSLTRLLIRDFRNIETADLALSPGFNFLVGANGSGKTSVLEAIYTLGHGRAFRSLQIGRVIRHEQEAFVLHGRLQGEERETAIGLTKDKQGDSKVRIDGTDGHKVAELAHLMPMQLITPEGFTLLNGGPKYRRAFLDWGCFHNEPGFFTAWSNLKRLLKQRNAALRQVTRYEQLRPWDKELIPLAEQISTWRAEYSAGIAADMADTCKQFLPEFSLTFSFQRGWEKETEYAEVLERNFERDRQLTYTAHGPHKADLRIRADGAPVEDTLSRGQLKLLMCALRLAQGEFLTRESGRRCLYLIDDFASELDDERRGLLASRLKATQSQVFVSAISAEHVIDMSDENSKMFTVEKGKITD</sequence>
<reference key="1">
    <citation type="journal article" date="2009" name="PLoS Genet.">
        <title>Organised genome dynamics in the Escherichia coli species results in highly diverse adaptive paths.</title>
        <authorList>
            <person name="Touchon M."/>
            <person name="Hoede C."/>
            <person name="Tenaillon O."/>
            <person name="Barbe V."/>
            <person name="Baeriswyl S."/>
            <person name="Bidet P."/>
            <person name="Bingen E."/>
            <person name="Bonacorsi S."/>
            <person name="Bouchier C."/>
            <person name="Bouvet O."/>
            <person name="Calteau A."/>
            <person name="Chiapello H."/>
            <person name="Clermont O."/>
            <person name="Cruveiller S."/>
            <person name="Danchin A."/>
            <person name="Diard M."/>
            <person name="Dossat C."/>
            <person name="Karoui M.E."/>
            <person name="Frapy E."/>
            <person name="Garry L."/>
            <person name="Ghigo J.M."/>
            <person name="Gilles A.M."/>
            <person name="Johnson J."/>
            <person name="Le Bouguenec C."/>
            <person name="Lescat M."/>
            <person name="Mangenot S."/>
            <person name="Martinez-Jehanne V."/>
            <person name="Matic I."/>
            <person name="Nassif X."/>
            <person name="Oztas S."/>
            <person name="Petit M.A."/>
            <person name="Pichon C."/>
            <person name="Rouy Z."/>
            <person name="Ruf C.S."/>
            <person name="Schneider D."/>
            <person name="Tourret J."/>
            <person name="Vacherie B."/>
            <person name="Vallenet D."/>
            <person name="Medigue C."/>
            <person name="Rocha E.P.C."/>
            <person name="Denamur E."/>
        </authorList>
    </citation>
    <scope>NUCLEOTIDE SEQUENCE [LARGE SCALE GENOMIC DNA]</scope>
    <source>
        <strain>55989 / EAEC</strain>
    </source>
</reference>
<proteinExistence type="inferred from homology"/>
<accession>B7L842</accession>
<comment type="function">
    <text evidence="1">The RecF protein is involved in DNA metabolism; it is required for DNA replication and normal SOS inducibility. RecF binds preferentially to single-stranded, linear DNA. It also seems to bind ATP.</text>
</comment>
<comment type="subcellular location">
    <subcellularLocation>
        <location evidence="1">Cytoplasm</location>
    </subcellularLocation>
</comment>
<comment type="similarity">
    <text evidence="1">Belongs to the RecF family.</text>
</comment>
<keyword id="KW-0067">ATP-binding</keyword>
<keyword id="KW-0963">Cytoplasm</keyword>
<keyword id="KW-0227">DNA damage</keyword>
<keyword id="KW-0234">DNA repair</keyword>
<keyword id="KW-0235">DNA replication</keyword>
<keyword id="KW-0238">DNA-binding</keyword>
<keyword id="KW-0547">Nucleotide-binding</keyword>
<keyword id="KW-1185">Reference proteome</keyword>
<keyword id="KW-0742">SOS response</keyword>
<name>RECF_ECO55</name>
<evidence type="ECO:0000255" key="1">
    <source>
        <dbReference type="HAMAP-Rule" id="MF_00365"/>
    </source>
</evidence>
<dbReference type="EMBL" id="CU928145">
    <property type="protein sequence ID" value="CAV00754.1"/>
    <property type="molecule type" value="Genomic_DNA"/>
</dbReference>
<dbReference type="RefSeq" id="WP_000060112.1">
    <property type="nucleotide sequence ID" value="NZ_CP028304.1"/>
</dbReference>
<dbReference type="SMR" id="B7L842"/>
<dbReference type="GeneID" id="93778441"/>
<dbReference type="KEGG" id="eck:EC55989_4169"/>
<dbReference type="HOGENOM" id="CLU_040267_0_0_6"/>
<dbReference type="Proteomes" id="UP000000746">
    <property type="component" value="Chromosome"/>
</dbReference>
<dbReference type="GO" id="GO:0005737">
    <property type="term" value="C:cytoplasm"/>
    <property type="evidence" value="ECO:0007669"/>
    <property type="project" value="UniProtKB-SubCell"/>
</dbReference>
<dbReference type="GO" id="GO:0005524">
    <property type="term" value="F:ATP binding"/>
    <property type="evidence" value="ECO:0007669"/>
    <property type="project" value="UniProtKB-UniRule"/>
</dbReference>
<dbReference type="GO" id="GO:0003697">
    <property type="term" value="F:single-stranded DNA binding"/>
    <property type="evidence" value="ECO:0007669"/>
    <property type="project" value="UniProtKB-UniRule"/>
</dbReference>
<dbReference type="GO" id="GO:0006260">
    <property type="term" value="P:DNA replication"/>
    <property type="evidence" value="ECO:0007669"/>
    <property type="project" value="UniProtKB-UniRule"/>
</dbReference>
<dbReference type="GO" id="GO:0000731">
    <property type="term" value="P:DNA synthesis involved in DNA repair"/>
    <property type="evidence" value="ECO:0007669"/>
    <property type="project" value="TreeGrafter"/>
</dbReference>
<dbReference type="GO" id="GO:0006302">
    <property type="term" value="P:double-strand break repair"/>
    <property type="evidence" value="ECO:0007669"/>
    <property type="project" value="TreeGrafter"/>
</dbReference>
<dbReference type="GO" id="GO:0009432">
    <property type="term" value="P:SOS response"/>
    <property type="evidence" value="ECO:0007669"/>
    <property type="project" value="UniProtKB-UniRule"/>
</dbReference>
<dbReference type="FunFam" id="1.20.1050.90:FF:000001">
    <property type="entry name" value="DNA replication and repair protein RecF"/>
    <property type="match status" value="1"/>
</dbReference>
<dbReference type="Gene3D" id="3.40.50.300">
    <property type="entry name" value="P-loop containing nucleotide triphosphate hydrolases"/>
    <property type="match status" value="1"/>
</dbReference>
<dbReference type="Gene3D" id="1.20.1050.90">
    <property type="entry name" value="RecF/RecN/SMC, N-terminal domain"/>
    <property type="match status" value="1"/>
</dbReference>
<dbReference type="HAMAP" id="MF_00365">
    <property type="entry name" value="RecF"/>
    <property type="match status" value="1"/>
</dbReference>
<dbReference type="InterPro" id="IPR001238">
    <property type="entry name" value="DNA-binding_RecF"/>
</dbReference>
<dbReference type="InterPro" id="IPR018078">
    <property type="entry name" value="DNA-binding_RecF_CS"/>
</dbReference>
<dbReference type="InterPro" id="IPR027417">
    <property type="entry name" value="P-loop_NTPase"/>
</dbReference>
<dbReference type="InterPro" id="IPR003395">
    <property type="entry name" value="RecF/RecN/SMC_N"/>
</dbReference>
<dbReference type="InterPro" id="IPR042174">
    <property type="entry name" value="RecF_2"/>
</dbReference>
<dbReference type="NCBIfam" id="TIGR00611">
    <property type="entry name" value="recf"/>
    <property type="match status" value="1"/>
</dbReference>
<dbReference type="PANTHER" id="PTHR32182">
    <property type="entry name" value="DNA REPLICATION AND REPAIR PROTEIN RECF"/>
    <property type="match status" value="1"/>
</dbReference>
<dbReference type="PANTHER" id="PTHR32182:SF0">
    <property type="entry name" value="DNA REPLICATION AND REPAIR PROTEIN RECF"/>
    <property type="match status" value="1"/>
</dbReference>
<dbReference type="Pfam" id="PF02463">
    <property type="entry name" value="SMC_N"/>
    <property type="match status" value="1"/>
</dbReference>
<dbReference type="SUPFAM" id="SSF52540">
    <property type="entry name" value="P-loop containing nucleoside triphosphate hydrolases"/>
    <property type="match status" value="1"/>
</dbReference>
<dbReference type="PROSITE" id="PS00617">
    <property type="entry name" value="RECF_1"/>
    <property type="match status" value="1"/>
</dbReference>
<dbReference type="PROSITE" id="PS00618">
    <property type="entry name" value="RECF_2"/>
    <property type="match status" value="1"/>
</dbReference>
<feature type="chain" id="PRO_1000133687" description="DNA replication and repair protein RecF">
    <location>
        <begin position="1"/>
        <end position="357"/>
    </location>
</feature>
<feature type="binding site" evidence="1">
    <location>
        <begin position="30"/>
        <end position="37"/>
    </location>
    <ligand>
        <name>ATP</name>
        <dbReference type="ChEBI" id="CHEBI:30616"/>
    </ligand>
</feature>
<protein>
    <recommendedName>
        <fullName evidence="1">DNA replication and repair protein RecF</fullName>
    </recommendedName>
</protein>